<gene>
    <name evidence="1" type="primary">mnmA</name>
    <name type="ordered locus">RL3957</name>
</gene>
<comment type="function">
    <text evidence="1">Catalyzes the 2-thiolation of uridine at the wobble position (U34) of tRNA, leading to the formation of s(2)U34.</text>
</comment>
<comment type="catalytic activity">
    <reaction evidence="1">
        <text>S-sulfanyl-L-cysteinyl-[protein] + uridine(34) in tRNA + AH2 + ATP = 2-thiouridine(34) in tRNA + L-cysteinyl-[protein] + A + AMP + diphosphate + H(+)</text>
        <dbReference type="Rhea" id="RHEA:47032"/>
        <dbReference type="Rhea" id="RHEA-COMP:10131"/>
        <dbReference type="Rhea" id="RHEA-COMP:11726"/>
        <dbReference type="Rhea" id="RHEA-COMP:11727"/>
        <dbReference type="Rhea" id="RHEA-COMP:11728"/>
        <dbReference type="ChEBI" id="CHEBI:13193"/>
        <dbReference type="ChEBI" id="CHEBI:15378"/>
        <dbReference type="ChEBI" id="CHEBI:17499"/>
        <dbReference type="ChEBI" id="CHEBI:29950"/>
        <dbReference type="ChEBI" id="CHEBI:30616"/>
        <dbReference type="ChEBI" id="CHEBI:33019"/>
        <dbReference type="ChEBI" id="CHEBI:61963"/>
        <dbReference type="ChEBI" id="CHEBI:65315"/>
        <dbReference type="ChEBI" id="CHEBI:87170"/>
        <dbReference type="ChEBI" id="CHEBI:456215"/>
        <dbReference type="EC" id="2.8.1.13"/>
    </reaction>
</comment>
<comment type="subcellular location">
    <subcellularLocation>
        <location evidence="1">Cytoplasm</location>
    </subcellularLocation>
</comment>
<comment type="similarity">
    <text evidence="1">Belongs to the MnmA/TRMU family.</text>
</comment>
<name>MNMA_RHIJ3</name>
<accession>Q1MC84</accession>
<sequence length="408" mass="43816">MTQAELAPSLNTLDFDKKPEETRVVVAMSGGVDSSVVAGLLKQQGYDVLGITLQLYDHGAAVHRAGSCCAGQDIDDARRVCETLGIPHYVLDYEKRFRETVINPFAESYVAGETPIPCVSCNQTVKFADLLATAKELGADALATGHYIRSGRNPSPENPGRRALFRPADADRDQSYFLFATTQEQIDYLRFPLGGLPKAETRRLAEEMGLVVAKKADSQDICFVPQGKYSDVITKLKPNAALAGEIVHLDGRVLGTHEGILHFTIGQRRGIGIATGEPLYVVFLDARSRRVIVGPKEALETHRVYLRDVNWLGDETLAEAAAGKGFACYAKVRSTRAPAPAVLHIDATGTYVDLTVGEAGIAPGQACALYSAPGDNARVFGGGFIERSEREPSAEACLKALLASPVAA</sequence>
<dbReference type="EC" id="2.8.1.13" evidence="1"/>
<dbReference type="EMBL" id="AM236080">
    <property type="protein sequence ID" value="CAK09447.1"/>
    <property type="molecule type" value="Genomic_DNA"/>
</dbReference>
<dbReference type="SMR" id="Q1MC84"/>
<dbReference type="EnsemblBacteria" id="CAK09447">
    <property type="protein sequence ID" value="CAK09447"/>
    <property type="gene ID" value="RL3957"/>
</dbReference>
<dbReference type="KEGG" id="rle:RL3957"/>
<dbReference type="eggNOG" id="COG0482">
    <property type="taxonomic scope" value="Bacteria"/>
</dbReference>
<dbReference type="HOGENOM" id="CLU_035188_0_1_5"/>
<dbReference type="Proteomes" id="UP000006575">
    <property type="component" value="Chromosome"/>
</dbReference>
<dbReference type="GO" id="GO:0005737">
    <property type="term" value="C:cytoplasm"/>
    <property type="evidence" value="ECO:0007669"/>
    <property type="project" value="UniProtKB-SubCell"/>
</dbReference>
<dbReference type="GO" id="GO:0005524">
    <property type="term" value="F:ATP binding"/>
    <property type="evidence" value="ECO:0007669"/>
    <property type="project" value="UniProtKB-KW"/>
</dbReference>
<dbReference type="GO" id="GO:0000049">
    <property type="term" value="F:tRNA binding"/>
    <property type="evidence" value="ECO:0007669"/>
    <property type="project" value="UniProtKB-KW"/>
</dbReference>
<dbReference type="GO" id="GO:0103016">
    <property type="term" value="F:tRNA-uridine 2-sulfurtransferase activity"/>
    <property type="evidence" value="ECO:0007669"/>
    <property type="project" value="UniProtKB-EC"/>
</dbReference>
<dbReference type="GO" id="GO:0002143">
    <property type="term" value="P:tRNA wobble position uridine thiolation"/>
    <property type="evidence" value="ECO:0007669"/>
    <property type="project" value="TreeGrafter"/>
</dbReference>
<dbReference type="CDD" id="cd01998">
    <property type="entry name" value="MnmA_TRMU-like"/>
    <property type="match status" value="1"/>
</dbReference>
<dbReference type="FunFam" id="3.40.50.620:FF:000115">
    <property type="entry name" value="tRNA-specific 2-thiouridylase MnmA"/>
    <property type="match status" value="1"/>
</dbReference>
<dbReference type="Gene3D" id="2.30.30.280">
    <property type="entry name" value="Adenine nucleotide alpha hydrolases-like domains"/>
    <property type="match status" value="1"/>
</dbReference>
<dbReference type="Gene3D" id="3.40.50.620">
    <property type="entry name" value="HUPs"/>
    <property type="match status" value="1"/>
</dbReference>
<dbReference type="Gene3D" id="2.40.30.10">
    <property type="entry name" value="Translation factors"/>
    <property type="match status" value="1"/>
</dbReference>
<dbReference type="HAMAP" id="MF_00144">
    <property type="entry name" value="tRNA_thiouridyl_MnmA"/>
    <property type="match status" value="1"/>
</dbReference>
<dbReference type="InterPro" id="IPR004506">
    <property type="entry name" value="MnmA-like"/>
</dbReference>
<dbReference type="InterPro" id="IPR046885">
    <property type="entry name" value="MnmA-like_C"/>
</dbReference>
<dbReference type="InterPro" id="IPR046884">
    <property type="entry name" value="MnmA-like_central"/>
</dbReference>
<dbReference type="InterPro" id="IPR023382">
    <property type="entry name" value="MnmA-like_central_sf"/>
</dbReference>
<dbReference type="InterPro" id="IPR014729">
    <property type="entry name" value="Rossmann-like_a/b/a_fold"/>
</dbReference>
<dbReference type="NCBIfam" id="NF001138">
    <property type="entry name" value="PRK00143.1"/>
    <property type="match status" value="1"/>
</dbReference>
<dbReference type="NCBIfam" id="TIGR00420">
    <property type="entry name" value="trmU"/>
    <property type="match status" value="1"/>
</dbReference>
<dbReference type="PANTHER" id="PTHR11933:SF5">
    <property type="entry name" value="MITOCHONDRIAL TRNA-SPECIFIC 2-THIOURIDYLASE 1"/>
    <property type="match status" value="1"/>
</dbReference>
<dbReference type="PANTHER" id="PTHR11933">
    <property type="entry name" value="TRNA 5-METHYLAMINOMETHYL-2-THIOURIDYLATE -METHYLTRANSFERASE"/>
    <property type="match status" value="1"/>
</dbReference>
<dbReference type="Pfam" id="PF03054">
    <property type="entry name" value="tRNA_Me_trans"/>
    <property type="match status" value="1"/>
</dbReference>
<dbReference type="Pfam" id="PF20258">
    <property type="entry name" value="tRNA_Me_trans_C"/>
    <property type="match status" value="1"/>
</dbReference>
<dbReference type="Pfam" id="PF20259">
    <property type="entry name" value="tRNA_Me_trans_M"/>
    <property type="match status" value="1"/>
</dbReference>
<dbReference type="SUPFAM" id="SSF52402">
    <property type="entry name" value="Adenine nucleotide alpha hydrolases-like"/>
    <property type="match status" value="1"/>
</dbReference>
<organism>
    <name type="scientific">Rhizobium johnstonii (strain DSM 114642 / LMG 32736 / 3841)</name>
    <name type="common">Rhizobium leguminosarum bv. viciae</name>
    <dbReference type="NCBI Taxonomy" id="216596"/>
    <lineage>
        <taxon>Bacteria</taxon>
        <taxon>Pseudomonadati</taxon>
        <taxon>Pseudomonadota</taxon>
        <taxon>Alphaproteobacteria</taxon>
        <taxon>Hyphomicrobiales</taxon>
        <taxon>Rhizobiaceae</taxon>
        <taxon>Rhizobium/Agrobacterium group</taxon>
        <taxon>Rhizobium</taxon>
        <taxon>Rhizobium johnstonii</taxon>
    </lineage>
</organism>
<evidence type="ECO:0000255" key="1">
    <source>
        <dbReference type="HAMAP-Rule" id="MF_00144"/>
    </source>
</evidence>
<reference key="1">
    <citation type="journal article" date="2006" name="Genome Biol.">
        <title>The genome of Rhizobium leguminosarum has recognizable core and accessory components.</title>
        <authorList>
            <person name="Young J.P.W."/>
            <person name="Crossman L.C."/>
            <person name="Johnston A.W.B."/>
            <person name="Thomson N.R."/>
            <person name="Ghazoui Z.F."/>
            <person name="Hull K.H."/>
            <person name="Wexler M."/>
            <person name="Curson A.R.J."/>
            <person name="Todd J.D."/>
            <person name="Poole P.S."/>
            <person name="Mauchline T.H."/>
            <person name="East A.K."/>
            <person name="Quail M.A."/>
            <person name="Churcher C."/>
            <person name="Arrowsmith C."/>
            <person name="Cherevach I."/>
            <person name="Chillingworth T."/>
            <person name="Clarke K."/>
            <person name="Cronin A."/>
            <person name="Davis P."/>
            <person name="Fraser A."/>
            <person name="Hance Z."/>
            <person name="Hauser H."/>
            <person name="Jagels K."/>
            <person name="Moule S."/>
            <person name="Mungall K."/>
            <person name="Norbertczak H."/>
            <person name="Rabbinowitsch E."/>
            <person name="Sanders M."/>
            <person name="Simmonds M."/>
            <person name="Whitehead S."/>
            <person name="Parkhill J."/>
        </authorList>
    </citation>
    <scope>NUCLEOTIDE SEQUENCE [LARGE SCALE GENOMIC DNA]</scope>
    <source>
        <strain>DSM 114642 / LMG 32736 / 3841</strain>
    </source>
</reference>
<feature type="chain" id="PRO_0000349767" description="tRNA-specific 2-thiouridylase MnmA">
    <location>
        <begin position="1"/>
        <end position="408"/>
    </location>
</feature>
<feature type="region of interest" description="Interaction with tRNA" evidence="1">
    <location>
        <begin position="172"/>
        <end position="174"/>
    </location>
</feature>
<feature type="active site" description="Nucleophile" evidence="1">
    <location>
        <position position="121"/>
    </location>
</feature>
<feature type="active site" description="Cysteine persulfide intermediate" evidence="1">
    <location>
        <position position="222"/>
    </location>
</feature>
<feature type="binding site" evidence="1">
    <location>
        <begin position="27"/>
        <end position="34"/>
    </location>
    <ligand>
        <name>ATP</name>
        <dbReference type="ChEBI" id="CHEBI:30616"/>
    </ligand>
</feature>
<feature type="binding site" evidence="1">
    <location>
        <position position="53"/>
    </location>
    <ligand>
        <name>ATP</name>
        <dbReference type="ChEBI" id="CHEBI:30616"/>
    </ligand>
</feature>
<feature type="binding site" evidence="1">
    <location>
        <position position="145"/>
    </location>
    <ligand>
        <name>ATP</name>
        <dbReference type="ChEBI" id="CHEBI:30616"/>
    </ligand>
</feature>
<feature type="site" description="Interaction with tRNA" evidence="1">
    <location>
        <position position="146"/>
    </location>
</feature>
<feature type="site" description="Interaction with tRNA" evidence="1">
    <location>
        <position position="365"/>
    </location>
</feature>
<feature type="disulfide bond" description="Alternate" evidence="1">
    <location>
        <begin position="121"/>
        <end position="222"/>
    </location>
</feature>
<keyword id="KW-0067">ATP-binding</keyword>
<keyword id="KW-0963">Cytoplasm</keyword>
<keyword id="KW-1015">Disulfide bond</keyword>
<keyword id="KW-0547">Nucleotide-binding</keyword>
<keyword id="KW-0694">RNA-binding</keyword>
<keyword id="KW-0808">Transferase</keyword>
<keyword id="KW-0819">tRNA processing</keyword>
<keyword id="KW-0820">tRNA-binding</keyword>
<proteinExistence type="inferred from homology"/>
<protein>
    <recommendedName>
        <fullName evidence="1">tRNA-specific 2-thiouridylase MnmA</fullName>
        <ecNumber evidence="1">2.8.1.13</ecNumber>
    </recommendedName>
</protein>